<proteinExistence type="evidence at transcript level"/>
<gene>
    <name type="primary">tbc1d23</name>
</gene>
<dbReference type="EMBL" id="BC070830">
    <property type="protein sequence ID" value="AAH70830.1"/>
    <property type="molecule type" value="mRNA"/>
</dbReference>
<dbReference type="RefSeq" id="NP_001084850.1">
    <property type="nucleotide sequence ID" value="NM_001091381.1"/>
</dbReference>
<dbReference type="SMR" id="Q6NRC7"/>
<dbReference type="DNASU" id="431896"/>
<dbReference type="GeneID" id="431896"/>
<dbReference type="KEGG" id="xla:431896"/>
<dbReference type="AGR" id="Xenbase:XB-GENE-5893511"/>
<dbReference type="CTD" id="431896"/>
<dbReference type="Xenbase" id="XB-GENE-5893511">
    <property type="gene designation" value="tbc1d23.S"/>
</dbReference>
<dbReference type="OrthoDB" id="73307at2759"/>
<dbReference type="Proteomes" id="UP000186698">
    <property type="component" value="Chromosome 2S"/>
</dbReference>
<dbReference type="Bgee" id="431896">
    <property type="expression patterns" value="Expressed in liver and 19 other cell types or tissues"/>
</dbReference>
<dbReference type="GO" id="GO:0031410">
    <property type="term" value="C:cytoplasmic vesicle"/>
    <property type="evidence" value="ECO:0000250"/>
    <property type="project" value="UniProtKB"/>
</dbReference>
<dbReference type="GO" id="GO:0005829">
    <property type="term" value="C:cytosol"/>
    <property type="evidence" value="ECO:0007669"/>
    <property type="project" value="GOC"/>
</dbReference>
<dbReference type="GO" id="GO:0005802">
    <property type="term" value="C:trans-Golgi network"/>
    <property type="evidence" value="ECO:0000250"/>
    <property type="project" value="UniProtKB"/>
</dbReference>
<dbReference type="GO" id="GO:1990403">
    <property type="term" value="P:embryonic brain development"/>
    <property type="evidence" value="ECO:0000250"/>
    <property type="project" value="UniProtKB"/>
</dbReference>
<dbReference type="GO" id="GO:0042147">
    <property type="term" value="P:retrograde transport, endosome to Golgi"/>
    <property type="evidence" value="ECO:0000318"/>
    <property type="project" value="GO_Central"/>
</dbReference>
<dbReference type="GO" id="GO:0099041">
    <property type="term" value="P:vesicle tethering to Golgi"/>
    <property type="evidence" value="ECO:0000250"/>
    <property type="project" value="UniProtKB"/>
</dbReference>
<dbReference type="CDD" id="cd20788">
    <property type="entry name" value="TBC1D23_C-like"/>
    <property type="match status" value="1"/>
</dbReference>
<dbReference type="FunFam" id="1.10.472.80:FF:000017">
    <property type="entry name" value="TBC1 domain family member 23"/>
    <property type="match status" value="1"/>
</dbReference>
<dbReference type="FunFam" id="3.40.250.10:FF:000002">
    <property type="entry name" value="TBC1 domain family member 23"/>
    <property type="match status" value="1"/>
</dbReference>
<dbReference type="Gene3D" id="3.40.250.10">
    <property type="entry name" value="Rhodanese-like domain"/>
    <property type="match status" value="1"/>
</dbReference>
<dbReference type="Gene3D" id="1.10.472.80">
    <property type="entry name" value="Ypt/Rab-GAP domain of gyp1p, domain 3"/>
    <property type="match status" value="1"/>
</dbReference>
<dbReference type="InterPro" id="IPR000195">
    <property type="entry name" value="Rab-GAP-TBC_dom"/>
</dbReference>
<dbReference type="InterPro" id="IPR035969">
    <property type="entry name" value="Rab-GAP_TBC_sf"/>
</dbReference>
<dbReference type="InterPro" id="IPR001763">
    <property type="entry name" value="Rhodanese-like_dom"/>
</dbReference>
<dbReference type="InterPro" id="IPR036873">
    <property type="entry name" value="Rhodanese-like_dom_sf"/>
</dbReference>
<dbReference type="InterPro" id="IPR039755">
    <property type="entry name" value="TBC1D23"/>
</dbReference>
<dbReference type="InterPro" id="IPR045799">
    <property type="entry name" value="TBC1D23_C"/>
</dbReference>
<dbReference type="PANTHER" id="PTHR13297:SF5">
    <property type="entry name" value="TBC1 DOMAIN FAMILY MEMBER 23"/>
    <property type="match status" value="1"/>
</dbReference>
<dbReference type="PANTHER" id="PTHR13297">
    <property type="entry name" value="TBC1 DOMAIN FAMILY MEMBER 23-RELATED"/>
    <property type="match status" value="1"/>
</dbReference>
<dbReference type="Pfam" id="PF00566">
    <property type="entry name" value="RabGAP-TBC"/>
    <property type="match status" value="1"/>
</dbReference>
<dbReference type="Pfam" id="PF00581">
    <property type="entry name" value="Rhodanese"/>
    <property type="match status" value="1"/>
</dbReference>
<dbReference type="Pfam" id="PF19430">
    <property type="entry name" value="TBC1D23_C"/>
    <property type="match status" value="1"/>
</dbReference>
<dbReference type="SMART" id="SM00164">
    <property type="entry name" value="TBC"/>
    <property type="match status" value="1"/>
</dbReference>
<dbReference type="SUPFAM" id="SSF52821">
    <property type="entry name" value="Rhodanese/Cell cycle control phosphatase"/>
    <property type="match status" value="1"/>
</dbReference>
<dbReference type="SUPFAM" id="SSF47923">
    <property type="entry name" value="Ypt/Rab-GAP domain of gyp1p"/>
    <property type="match status" value="1"/>
</dbReference>
<dbReference type="PROSITE" id="PS50206">
    <property type="entry name" value="RHODANESE_3"/>
    <property type="match status" value="1"/>
</dbReference>
<dbReference type="PROSITE" id="PS50086">
    <property type="entry name" value="TBC_RABGAP"/>
    <property type="match status" value="1"/>
</dbReference>
<reference key="1">
    <citation type="submission" date="2004-05" db="EMBL/GenBank/DDBJ databases">
        <authorList>
            <consortium name="NIH - Xenopus Gene Collection (XGC) project"/>
        </authorList>
    </citation>
    <scope>NUCLEOTIDE SEQUENCE [LARGE SCALE MRNA]</scope>
    <source>
        <tissue>Oocyte</tissue>
    </source>
</reference>
<accession>Q6NRC7</accession>
<comment type="function">
    <text evidence="1 2 3">Putative Rab GTPase-activating protein which plays a role in vesicular trafficking. Involved in endosome-to-Golgi trafficking. Acts as a bridging protein by binding simultaneously to golgins, located at the trans-Golgi, and to the WASH complex, located on endosome-derived vesicles (By similarity). Plays a role in brain development (By similarity). May act as a general inhibitor of innate immunity signaling (By similarity).</text>
</comment>
<comment type="subcellular location">
    <subcellularLocation>
        <location evidence="3">Golgi apparatus</location>
        <location evidence="3">trans-Golgi network</location>
    </subcellularLocation>
    <subcellularLocation>
        <location evidence="3">Cytoplasmic vesicle</location>
    </subcellularLocation>
</comment>
<feature type="chain" id="PRO_0000287502" description="TBC1 domain family member 23">
    <location>
        <begin position="1"/>
        <end position="682"/>
    </location>
</feature>
<feature type="domain" description="Rab-GAP TBC" evidence="4">
    <location>
        <begin position="29"/>
        <end position="210"/>
    </location>
</feature>
<feature type="domain" description="Rhodanese" evidence="5">
    <location>
        <begin position="318"/>
        <end position="426"/>
    </location>
</feature>
<protein>
    <recommendedName>
        <fullName>TBC1 domain family member 23</fullName>
    </recommendedName>
</protein>
<name>TBC23_XENLA</name>
<organism>
    <name type="scientific">Xenopus laevis</name>
    <name type="common">African clawed frog</name>
    <dbReference type="NCBI Taxonomy" id="8355"/>
    <lineage>
        <taxon>Eukaryota</taxon>
        <taxon>Metazoa</taxon>
        <taxon>Chordata</taxon>
        <taxon>Craniata</taxon>
        <taxon>Vertebrata</taxon>
        <taxon>Euteleostomi</taxon>
        <taxon>Amphibia</taxon>
        <taxon>Batrachia</taxon>
        <taxon>Anura</taxon>
        <taxon>Pipoidea</taxon>
        <taxon>Pipidae</taxon>
        <taxon>Xenopodinae</taxon>
        <taxon>Xenopus</taxon>
        <taxon>Xenopus</taxon>
    </lineage>
</organism>
<keyword id="KW-0968">Cytoplasmic vesicle</keyword>
<keyword id="KW-0217">Developmental protein</keyword>
<keyword id="KW-0333">Golgi apparatus</keyword>
<keyword id="KW-1185">Reference proteome</keyword>
<evidence type="ECO:0000250" key="1">
    <source>
        <dbReference type="UniProtKB" id="Q7SXV1"/>
    </source>
</evidence>
<evidence type="ECO:0000250" key="2">
    <source>
        <dbReference type="UniProtKB" id="Q8K0F1"/>
    </source>
</evidence>
<evidence type="ECO:0000250" key="3">
    <source>
        <dbReference type="UniProtKB" id="Q9NUY8"/>
    </source>
</evidence>
<evidence type="ECO:0000255" key="4">
    <source>
        <dbReference type="PROSITE-ProRule" id="PRU00163"/>
    </source>
</evidence>
<evidence type="ECO:0000255" key="5">
    <source>
        <dbReference type="PROSITE-ProRule" id="PRU00173"/>
    </source>
</evidence>
<sequence length="682" mass="76850">MCREADLSEALEAGGCDLETVRNIIQGRPVPCDLRTKVWKIALNVSGKGDSLASWDGSLDLQEQPLIHRDCQNLIDRLSVAEERKTALLEDIESVVTFYCKSRNVKYQEDASWIHLLNPLVGLQLPRSDLYNCFYAIMNKYIPRDCNRKGKPFHLFRLLLQYHEPELCSFLDTKKITPDLYALNWFGSLFAFHCSVEVTQAIWDNYLQQADPFFMYFLMLIMLVNSKETVLGQDMDDKEELIKCLENTPSSLEVEDIEDLFSLAQYYYSKTPASFRKDHQSLFGSSLIAFKDDTDLSQALCLAVSVSEILQANQQQGDGVRFFVVDCRPAEQYNSGHLSTAFHLDSDLMLQNPGEFALSVKSLLEAQKQSIESGSIAGGEHLCFMGSGRDEEDMYINMVLAHFLQKNKEYISIAKGGFMALQQHLADFNMENGYGHWIVSTSGSHSSISMYADGDSAVAADDGKGMKSLVNKMTVAFKTKSVNVKDKVISFIENTATPVDRITFNIPWPERASLERHVSSSDRVGKPYRGVKPVFSIGDEEEYDTDEVDSSSMSDDDRKEIVNVQTWINKPDVKHHFPCDEVKDNGHRFPSHLLVTATHMYCLREILSKKGFAYIQSRQALSTVVKITSKKKHPELITFKYGSSNASGVEISAVERYLIPNAGDATKAIKQQIMKVLDALES</sequence>